<geneLocation type="plasmid">
    <name>lp54</name>
</geneLocation>
<organism>
    <name type="scientific">Borreliella burgdorferi (strain ATCC 35210 / DSM 4680 / CIP 102532 / B31)</name>
    <name type="common">Borrelia burgdorferi</name>
    <dbReference type="NCBI Taxonomy" id="224326"/>
    <lineage>
        <taxon>Bacteria</taxon>
        <taxon>Pseudomonadati</taxon>
        <taxon>Spirochaetota</taxon>
        <taxon>Spirochaetia</taxon>
        <taxon>Spirochaetales</taxon>
        <taxon>Borreliaceae</taxon>
        <taxon>Borreliella</taxon>
    </lineage>
</organism>
<evidence type="ECO:0000255" key="1">
    <source>
        <dbReference type="HAMAP-Rule" id="MF_01408"/>
    </source>
</evidence>
<evidence type="ECO:0000255" key="2">
    <source>
        <dbReference type="PROSITE-ProRule" id="PRU00661"/>
    </source>
</evidence>
<gene>
    <name evidence="1" type="primary">thyX</name>
    <name type="ordered locus">BB_A76</name>
</gene>
<name>THYX_BORBU</name>
<proteinExistence type="inferred from homology"/>
<sequence length="265" mass="31277">MNKEYKILDNGFLKLIDFMGDDRRIVKAARISYREESVKRKDAELIDYLIRNGHTSPLEQVVFTFHVKAPIFVARQWMRHRTARINEVSGCYSLAREEFYVPLEEDLKCQTSSNSSEKEFKSLEKLSDKIKHHQKHSYELYQDMINANIPKELSRIVLPLSLYTEWYWQIDLNNLFHFIKLRLALDSPKEIKENSPKEMREYAKALISIVREIVPIAFNSFENHFLRGKRFSHEEIIAIINALDLNKLSMDAEKLNLLKDKLGID</sequence>
<feature type="chain" id="PRO_0000175553" description="Flavin-dependent thymidylate synthase">
    <location>
        <begin position="1"/>
        <end position="265"/>
    </location>
</feature>
<feature type="domain" description="ThyX" evidence="2">
    <location>
        <begin position="11"/>
        <end position="224"/>
    </location>
</feature>
<feature type="short sequence motif" description="ThyX motif" evidence="1">
    <location>
        <begin position="79"/>
        <end position="89"/>
    </location>
</feature>
<feature type="active site" description="Involved in ionization of N3 of dUMP, leading to its activation" evidence="1">
    <location>
        <position position="182"/>
    </location>
</feature>
<feature type="binding site" evidence="1">
    <location>
        <position position="56"/>
    </location>
    <ligand>
        <name>FAD</name>
        <dbReference type="ChEBI" id="CHEBI:57692"/>
        <note>ligand shared between neighboring subunits</note>
    </ligand>
</feature>
<feature type="binding site" evidence="1">
    <location>
        <begin position="76"/>
        <end position="79"/>
    </location>
    <ligand>
        <name>dUMP</name>
        <dbReference type="ChEBI" id="CHEBI:246422"/>
        <note>ligand shared between dimeric partners</note>
    </ligand>
</feature>
<feature type="binding site" evidence="1">
    <location>
        <begin position="79"/>
        <end position="81"/>
    </location>
    <ligand>
        <name>FAD</name>
        <dbReference type="ChEBI" id="CHEBI:57692"/>
        <note>ligand shared between neighboring subunits</note>
    </ligand>
</feature>
<feature type="binding site" evidence="1">
    <location>
        <position position="87"/>
    </location>
    <ligand>
        <name>FAD</name>
        <dbReference type="ChEBI" id="CHEBI:57692"/>
        <note>ligand shared between neighboring subunits</note>
    </ligand>
</feature>
<feature type="binding site" description="in other chain" evidence="1">
    <location>
        <position position="155"/>
    </location>
    <ligand>
        <name>dUMP</name>
        <dbReference type="ChEBI" id="CHEBI:246422"/>
        <note>ligand shared between dimeric partners</note>
    </ligand>
</feature>
<feature type="binding site" evidence="1">
    <location>
        <begin position="171"/>
        <end position="173"/>
    </location>
    <ligand>
        <name>FAD</name>
        <dbReference type="ChEBI" id="CHEBI:57692"/>
        <note>ligand shared between neighboring subunits</note>
    </ligand>
</feature>
<feature type="binding site" evidence="1">
    <location>
        <position position="177"/>
    </location>
    <ligand>
        <name>FAD</name>
        <dbReference type="ChEBI" id="CHEBI:57692"/>
        <note>ligand shared between neighboring subunits</note>
    </ligand>
</feature>
<feature type="binding site" evidence="1">
    <location>
        <position position="182"/>
    </location>
    <ligand>
        <name>dUMP</name>
        <dbReference type="ChEBI" id="CHEBI:246422"/>
        <note>ligand shared between dimeric partners</note>
    </ligand>
</feature>
<reference key="1">
    <citation type="journal article" date="1997" name="Nature">
        <title>Genomic sequence of a Lyme disease spirochaete, Borrelia burgdorferi.</title>
        <authorList>
            <person name="Fraser C.M."/>
            <person name="Casjens S."/>
            <person name="Huang W.M."/>
            <person name="Sutton G.G."/>
            <person name="Clayton R.A."/>
            <person name="Lathigra R."/>
            <person name="White O."/>
            <person name="Ketchum K.A."/>
            <person name="Dodson R.J."/>
            <person name="Hickey E.K."/>
            <person name="Gwinn M.L."/>
            <person name="Dougherty B.A."/>
            <person name="Tomb J.-F."/>
            <person name="Fleischmann R.D."/>
            <person name="Richardson D.L."/>
            <person name="Peterson J.D."/>
            <person name="Kerlavage A.R."/>
            <person name="Quackenbush J."/>
            <person name="Salzberg S.L."/>
            <person name="Hanson M."/>
            <person name="van Vugt R."/>
            <person name="Palmer N."/>
            <person name="Adams M.D."/>
            <person name="Gocayne J.D."/>
            <person name="Weidman J.F."/>
            <person name="Utterback T.R."/>
            <person name="Watthey L."/>
            <person name="McDonald L.A."/>
            <person name="Artiach P."/>
            <person name="Bowman C."/>
            <person name="Garland S.A."/>
            <person name="Fujii C."/>
            <person name="Cotton M.D."/>
            <person name="Horst K."/>
            <person name="Roberts K.M."/>
            <person name="Hatch B."/>
            <person name="Smith H.O."/>
            <person name="Venter J.C."/>
        </authorList>
    </citation>
    <scope>NUCLEOTIDE SEQUENCE [LARGE SCALE GENOMIC DNA]</scope>
    <source>
        <strain>ATCC 35210 / DSM 4680 / CIP 102532 / B31</strain>
    </source>
</reference>
<accession>O50965</accession>
<protein>
    <recommendedName>
        <fullName evidence="1">Flavin-dependent thymidylate synthase</fullName>
        <shortName evidence="1">FDTS</shortName>
        <ecNumber evidence="1">2.1.1.148</ecNumber>
    </recommendedName>
    <alternativeName>
        <fullName evidence="1">FAD-dependent thymidylate synthase</fullName>
    </alternativeName>
    <alternativeName>
        <fullName evidence="1">Thymidylate synthase ThyX</fullName>
        <shortName evidence="1">TS</shortName>
        <shortName evidence="1">TSase</shortName>
    </alternativeName>
</protein>
<keyword id="KW-0274">FAD</keyword>
<keyword id="KW-0285">Flavoprotein</keyword>
<keyword id="KW-0489">Methyltransferase</keyword>
<keyword id="KW-0521">NADP</keyword>
<keyword id="KW-0545">Nucleotide biosynthesis</keyword>
<keyword id="KW-0614">Plasmid</keyword>
<keyword id="KW-1185">Reference proteome</keyword>
<keyword id="KW-0808">Transferase</keyword>
<dbReference type="EC" id="2.1.1.148" evidence="1"/>
<dbReference type="EMBL" id="AE000790">
    <property type="protein sequence ID" value="AAC66242.1"/>
    <property type="molecule type" value="Genomic_DNA"/>
</dbReference>
<dbReference type="PIR" id="D70216">
    <property type="entry name" value="D70216"/>
</dbReference>
<dbReference type="RefSeq" id="NP_045749.1">
    <property type="nucleotide sequence ID" value="NC_001857.2"/>
</dbReference>
<dbReference type="RefSeq" id="WP_010890400.1">
    <property type="nucleotide sequence ID" value="NC_001857.2"/>
</dbReference>
<dbReference type="SMR" id="O50965"/>
<dbReference type="EnsemblBacteria" id="AAC66242">
    <property type="protein sequence ID" value="AAC66242"/>
    <property type="gene ID" value="BB_A76"/>
</dbReference>
<dbReference type="KEGG" id="bbu:BB_A76"/>
<dbReference type="PATRIC" id="fig|224326.49.peg.1589"/>
<dbReference type="HOGENOM" id="CLU_067790_0_0_12"/>
<dbReference type="OrthoDB" id="9774464at2"/>
<dbReference type="UniPathway" id="UPA00575"/>
<dbReference type="Proteomes" id="UP000001807">
    <property type="component" value="Plasmid lp54"/>
</dbReference>
<dbReference type="GO" id="GO:0050660">
    <property type="term" value="F:flavin adenine dinucleotide binding"/>
    <property type="evidence" value="ECO:0007669"/>
    <property type="project" value="InterPro"/>
</dbReference>
<dbReference type="GO" id="GO:0070402">
    <property type="term" value="F:NADPH binding"/>
    <property type="evidence" value="ECO:0007669"/>
    <property type="project" value="TreeGrafter"/>
</dbReference>
<dbReference type="GO" id="GO:0050797">
    <property type="term" value="F:thymidylate synthase (FAD) activity"/>
    <property type="evidence" value="ECO:0007669"/>
    <property type="project" value="UniProtKB-UniRule"/>
</dbReference>
<dbReference type="GO" id="GO:0004799">
    <property type="term" value="F:thymidylate synthase activity"/>
    <property type="evidence" value="ECO:0007669"/>
    <property type="project" value="TreeGrafter"/>
</dbReference>
<dbReference type="GO" id="GO:0006231">
    <property type="term" value="P:dTMP biosynthetic process"/>
    <property type="evidence" value="ECO:0007669"/>
    <property type="project" value="UniProtKB-UniRule"/>
</dbReference>
<dbReference type="GO" id="GO:0006235">
    <property type="term" value="P:dTTP biosynthetic process"/>
    <property type="evidence" value="ECO:0007669"/>
    <property type="project" value="UniProtKB-UniRule"/>
</dbReference>
<dbReference type="GO" id="GO:0032259">
    <property type="term" value="P:methylation"/>
    <property type="evidence" value="ECO:0007669"/>
    <property type="project" value="UniProtKB-KW"/>
</dbReference>
<dbReference type="CDD" id="cd20175">
    <property type="entry name" value="ThyX"/>
    <property type="match status" value="1"/>
</dbReference>
<dbReference type="Gene3D" id="3.30.1360.170">
    <property type="match status" value="1"/>
</dbReference>
<dbReference type="HAMAP" id="MF_01408">
    <property type="entry name" value="ThyX"/>
    <property type="match status" value="1"/>
</dbReference>
<dbReference type="InterPro" id="IPR003669">
    <property type="entry name" value="Thymidylate_synthase_ThyX"/>
</dbReference>
<dbReference type="InterPro" id="IPR036098">
    <property type="entry name" value="Thymidylate_synthase_ThyX_sf"/>
</dbReference>
<dbReference type="NCBIfam" id="TIGR02170">
    <property type="entry name" value="thyX"/>
    <property type="match status" value="1"/>
</dbReference>
<dbReference type="PANTHER" id="PTHR34934">
    <property type="entry name" value="FLAVIN-DEPENDENT THYMIDYLATE SYNTHASE"/>
    <property type="match status" value="1"/>
</dbReference>
<dbReference type="PANTHER" id="PTHR34934:SF1">
    <property type="entry name" value="FLAVIN-DEPENDENT THYMIDYLATE SYNTHASE"/>
    <property type="match status" value="1"/>
</dbReference>
<dbReference type="Pfam" id="PF02511">
    <property type="entry name" value="Thy1"/>
    <property type="match status" value="1"/>
</dbReference>
<dbReference type="SUPFAM" id="SSF69796">
    <property type="entry name" value="Thymidylate synthase-complementing protein Thy1"/>
    <property type="match status" value="1"/>
</dbReference>
<dbReference type="PROSITE" id="PS51331">
    <property type="entry name" value="THYX"/>
    <property type="match status" value="1"/>
</dbReference>
<comment type="function">
    <text evidence="1">Catalyzes the reductive methylation of 2'-deoxyuridine-5'-monophosphate (dUMP) to 2'-deoxythymidine-5'-monophosphate (dTMP) while utilizing 5,10-methylenetetrahydrofolate (mTHF) as the methyl donor, and NADPH and FADH(2) as the reductant.</text>
</comment>
<comment type="catalytic activity">
    <reaction evidence="1">
        <text>dUMP + (6R)-5,10-methylene-5,6,7,8-tetrahydrofolate + NADPH + H(+) = dTMP + (6S)-5,6,7,8-tetrahydrofolate + NADP(+)</text>
        <dbReference type="Rhea" id="RHEA:29043"/>
        <dbReference type="ChEBI" id="CHEBI:15378"/>
        <dbReference type="ChEBI" id="CHEBI:15636"/>
        <dbReference type="ChEBI" id="CHEBI:57453"/>
        <dbReference type="ChEBI" id="CHEBI:57783"/>
        <dbReference type="ChEBI" id="CHEBI:58349"/>
        <dbReference type="ChEBI" id="CHEBI:63528"/>
        <dbReference type="ChEBI" id="CHEBI:246422"/>
        <dbReference type="EC" id="2.1.1.148"/>
    </reaction>
</comment>
<comment type="cofactor">
    <cofactor evidence="1">
        <name>FAD</name>
        <dbReference type="ChEBI" id="CHEBI:57692"/>
    </cofactor>
    <text evidence="1">Binds 4 FAD per tetramer. Each FAD binding site is formed by three monomers.</text>
</comment>
<comment type="pathway">
    <text evidence="1">Pyrimidine metabolism; dTTP biosynthesis.</text>
</comment>
<comment type="subunit">
    <text evidence="1">Homotetramer.</text>
</comment>
<comment type="similarity">
    <text evidence="1">Belongs to the thymidylate synthase ThyX family.</text>
</comment>